<gene>
    <name type="primary">SSR1</name>
    <name type="synonym">CCW14</name>
    <name type="ordered locus">CAALFM_C700860WA</name>
    <name type="ORF">CaO19.7030</name>
</gene>
<comment type="function">
    <text evidence="5 7">Beta-glucan associated cell wall protein involved in cell wall structure. May serve as cross-linking or coat-forming wall protein.</text>
</comment>
<comment type="subcellular location">
    <subcellularLocation>
        <location evidence="5 6 7 8 9 10 12 13 14">Secreted</location>
        <location evidence="5 6 7 8 9 10 12 13 14">Cell wall</location>
    </subcellularLocation>
    <subcellularLocation>
        <location evidence="1">Membrane</location>
        <topology evidence="1">Lipid-anchor</topology>
        <topology evidence="1">GPI-anchor</topology>
    </subcellularLocation>
    <text>Covalently-linked GPI-modified cell wall protein (GPI-CWP).</text>
</comment>
<comment type="induction">
    <text evidence="5 13 14">Expressed in both yeast and hyphal cells at the same level, indicating that it has no morphological differential expression. Expression is slightly increased by fluconazole.</text>
</comment>
<comment type="PTM">
    <text>The GPI-anchor is attached to the protein in the endoplasmic reticulum and serves to target the protein to the cell surface. There, the glucosamine-inositol phospholipid moiety is cleaved off and the GPI-modified mannoprotein is covalently attached via its lipidless GPI glycan remnant to the 1,6-beta-glucan of the outer cell wall layer.</text>
</comment>
<comment type="disruption phenotype">
    <text evidence="5 11">Leads to increased sensitivity to caspofungin, Congo red, calcofluor white, and zymolyase.</text>
</comment>
<comment type="similarity">
    <text evidence="15">Belongs to the CCW14 family.</text>
</comment>
<feature type="signal peptide" evidence="2">
    <location>
        <begin position="1"/>
        <end position="22"/>
    </location>
</feature>
<feature type="chain" id="PRO_0000424853" description="Covalently-linked cell wall protein 14">
    <location>
        <begin position="23"/>
        <end position="215"/>
    </location>
</feature>
<feature type="propeptide" id="PRO_0000424854" description="Removed in mature form" evidence="2">
    <location>
        <begin position="216"/>
        <end position="234"/>
    </location>
</feature>
<feature type="domain" description="CFEM" evidence="3">
    <location>
        <begin position="23"/>
        <end position="109"/>
    </location>
</feature>
<feature type="region of interest" description="Disordered" evidence="4">
    <location>
        <begin position="86"/>
        <end position="208"/>
    </location>
</feature>
<feature type="compositionally biased region" description="Low complexity" evidence="4">
    <location>
        <begin position="86"/>
        <end position="207"/>
    </location>
</feature>
<feature type="binding site" description="axial binding residue" evidence="3">
    <location>
        <position position="46"/>
    </location>
    <ligand>
        <name>heme</name>
        <dbReference type="ChEBI" id="CHEBI:30413"/>
    </ligand>
    <ligandPart>
        <name>Fe</name>
        <dbReference type="ChEBI" id="CHEBI:18248"/>
    </ligandPart>
</feature>
<feature type="lipid moiety-binding region" description="GPI-anchor amidated glycine" evidence="2">
    <location>
        <position position="215"/>
    </location>
</feature>
<feature type="disulfide bond" evidence="3">
    <location>
        <begin position="27"/>
        <end position="66"/>
    </location>
</feature>
<feature type="disulfide bond" evidence="3">
    <location>
        <begin position="31"/>
        <end position="61"/>
    </location>
</feature>
<feature type="disulfide bond" evidence="3">
    <location>
        <begin position="41"/>
        <end position="49"/>
    </location>
</feature>
<feature type="disulfide bond" evidence="3">
    <location>
        <begin position="51"/>
        <end position="82"/>
    </location>
</feature>
<accession>Q5AFN8</accession>
<accession>A0A1D8PQP6</accession>
<accession>Q3MPP7</accession>
<name>CCW14_CANAL</name>
<protein>
    <recommendedName>
        <fullName>Covalently-linked cell wall protein 14</fullName>
    </recommendedName>
</protein>
<evidence type="ECO:0000250" key="1"/>
<evidence type="ECO:0000255" key="2"/>
<evidence type="ECO:0000255" key="3">
    <source>
        <dbReference type="PROSITE-ProRule" id="PRU01356"/>
    </source>
</evidence>
<evidence type="ECO:0000256" key="4">
    <source>
        <dbReference type="SAM" id="MobiDB-lite"/>
    </source>
</evidence>
<evidence type="ECO:0000269" key="5">
    <source>
    </source>
</evidence>
<evidence type="ECO:0000269" key="6">
    <source>
    </source>
</evidence>
<evidence type="ECO:0000269" key="7">
    <source>
    </source>
</evidence>
<evidence type="ECO:0000269" key="8">
    <source>
    </source>
</evidence>
<evidence type="ECO:0000269" key="9">
    <source>
    </source>
</evidence>
<evidence type="ECO:0000269" key="10">
    <source>
    </source>
</evidence>
<evidence type="ECO:0000269" key="11">
    <source>
    </source>
</evidence>
<evidence type="ECO:0000269" key="12">
    <source>
    </source>
</evidence>
<evidence type="ECO:0000269" key="13">
    <source>
    </source>
</evidence>
<evidence type="ECO:0000269" key="14">
    <source>
    </source>
</evidence>
<evidence type="ECO:0000305" key="15"/>
<dbReference type="EMBL" id="CP017629">
    <property type="protein sequence ID" value="AOW30462.1"/>
    <property type="molecule type" value="Genomic_DNA"/>
</dbReference>
<dbReference type="RefSeq" id="XP_720324.1">
    <property type="nucleotide sequence ID" value="XM_715231.1"/>
</dbReference>
<dbReference type="STRING" id="237561.Q5AFN8"/>
<dbReference type="EnsemblFungi" id="C7_00860W_A-T">
    <property type="protein sequence ID" value="C7_00860W_A-T-p1"/>
    <property type="gene ID" value="C7_00860W_A"/>
</dbReference>
<dbReference type="GeneID" id="3638055"/>
<dbReference type="KEGG" id="cal:CAALFM_C700860WA"/>
<dbReference type="CGD" id="CAL0000197579">
    <property type="gene designation" value="SSR1"/>
</dbReference>
<dbReference type="VEuPathDB" id="FungiDB:C7_00860W_A"/>
<dbReference type="eggNOG" id="ENOG502S1X2">
    <property type="taxonomic scope" value="Eukaryota"/>
</dbReference>
<dbReference type="HOGENOM" id="CLU_078308_1_0_1"/>
<dbReference type="InParanoid" id="Q5AFN8"/>
<dbReference type="OMA" id="ICPNDNA"/>
<dbReference type="OrthoDB" id="4095829at2759"/>
<dbReference type="Proteomes" id="UP000000559">
    <property type="component" value="Chromosome 7"/>
</dbReference>
<dbReference type="GO" id="GO:0009986">
    <property type="term" value="C:cell surface"/>
    <property type="evidence" value="ECO:0000314"/>
    <property type="project" value="CGD"/>
</dbReference>
<dbReference type="GO" id="GO:0005576">
    <property type="term" value="C:extracellular region"/>
    <property type="evidence" value="ECO:0000314"/>
    <property type="project" value="CGD"/>
</dbReference>
<dbReference type="GO" id="GO:0009277">
    <property type="term" value="C:fungal-type cell wall"/>
    <property type="evidence" value="ECO:0000314"/>
    <property type="project" value="CGD"/>
</dbReference>
<dbReference type="GO" id="GO:0005886">
    <property type="term" value="C:plasma membrane"/>
    <property type="evidence" value="ECO:0000314"/>
    <property type="project" value="CGD"/>
</dbReference>
<dbReference type="GO" id="GO:0098552">
    <property type="term" value="C:side of membrane"/>
    <property type="evidence" value="ECO:0007669"/>
    <property type="project" value="UniProtKB-KW"/>
</dbReference>
<dbReference type="GO" id="GO:0030445">
    <property type="term" value="C:yeast-form cell wall"/>
    <property type="evidence" value="ECO:0000314"/>
    <property type="project" value="CGD"/>
</dbReference>
<dbReference type="GO" id="GO:0046872">
    <property type="term" value="F:metal ion binding"/>
    <property type="evidence" value="ECO:0007669"/>
    <property type="project" value="UniProtKB-KW"/>
</dbReference>
<dbReference type="GO" id="GO:0005199">
    <property type="term" value="F:structural constituent of cell wall"/>
    <property type="evidence" value="ECO:0007669"/>
    <property type="project" value="EnsemblFungi"/>
</dbReference>
<dbReference type="GO" id="GO:0031505">
    <property type="term" value="P:fungal-type cell wall organization"/>
    <property type="evidence" value="ECO:0000315"/>
    <property type="project" value="CGD"/>
</dbReference>
<dbReference type="InterPro" id="IPR008427">
    <property type="entry name" value="Extracellular_membr_CFEM_dom"/>
</dbReference>
<dbReference type="Pfam" id="PF05730">
    <property type="entry name" value="CFEM"/>
    <property type="match status" value="1"/>
</dbReference>
<dbReference type="SMART" id="SM00747">
    <property type="entry name" value="CFEM"/>
    <property type="match status" value="1"/>
</dbReference>
<dbReference type="PROSITE" id="PS52012">
    <property type="entry name" value="CFEM"/>
    <property type="match status" value="1"/>
</dbReference>
<reference key="1">
    <citation type="journal article" date="2004" name="Proc. Natl. Acad. Sci. U.S.A.">
        <title>The diploid genome sequence of Candida albicans.</title>
        <authorList>
            <person name="Jones T."/>
            <person name="Federspiel N.A."/>
            <person name="Chibana H."/>
            <person name="Dungan J."/>
            <person name="Kalman S."/>
            <person name="Magee B.B."/>
            <person name="Newport G."/>
            <person name="Thorstenson Y.R."/>
            <person name="Agabian N."/>
            <person name="Magee P.T."/>
            <person name="Davis R.W."/>
            <person name="Scherer S."/>
        </authorList>
    </citation>
    <scope>NUCLEOTIDE SEQUENCE [LARGE SCALE GENOMIC DNA]</scope>
    <source>
        <strain>SC5314 / ATCC MYA-2876</strain>
    </source>
</reference>
<reference key="2">
    <citation type="journal article" date="2007" name="Genome Biol.">
        <title>Assembly of the Candida albicans genome into sixteen supercontigs aligned on the eight chromosomes.</title>
        <authorList>
            <person name="van het Hoog M."/>
            <person name="Rast T.J."/>
            <person name="Martchenko M."/>
            <person name="Grindle S."/>
            <person name="Dignard D."/>
            <person name="Hogues H."/>
            <person name="Cuomo C."/>
            <person name="Berriman M."/>
            <person name="Scherer S."/>
            <person name="Magee B.B."/>
            <person name="Whiteway M."/>
            <person name="Chibana H."/>
            <person name="Nantel A."/>
            <person name="Magee P.T."/>
        </authorList>
    </citation>
    <scope>GENOME REANNOTATION</scope>
    <source>
        <strain>SC5314 / ATCC MYA-2876</strain>
    </source>
</reference>
<reference key="3">
    <citation type="journal article" date="2013" name="Genome Biol.">
        <title>Assembly of a phased diploid Candida albicans genome facilitates allele-specific measurements and provides a simple model for repeat and indel structure.</title>
        <authorList>
            <person name="Muzzey D."/>
            <person name="Schwartz K."/>
            <person name="Weissman J.S."/>
            <person name="Sherlock G."/>
        </authorList>
    </citation>
    <scope>NUCLEOTIDE SEQUENCE [LARGE SCALE GENOMIC DNA]</scope>
    <scope>GENOME REANNOTATION</scope>
    <source>
        <strain>SC5314 / ATCC MYA-2876</strain>
    </source>
</reference>
<reference key="4">
    <citation type="journal article" date="2003" name="Microbiology">
        <title>Identification and study of a Candida albicans protein homologous to Saccharomyces cerevisiae Ssr1p, an internal cell-wall protein.</title>
        <authorList>
            <person name="Garcera A."/>
            <person name="Martinez A.I."/>
            <person name="Castillo L."/>
            <person name="Elorza M.V."/>
            <person name="Sentandreu R."/>
            <person name="Valentin E."/>
        </authorList>
    </citation>
    <scope>INDUCTION</scope>
    <scope>SUBCELLULAR LOCATION</scope>
    <scope>FUNCTION</scope>
    <scope>DISRUPTION PHENOTYPE</scope>
</reference>
<reference key="5">
    <citation type="journal article" date="2003" name="Yeast">
        <title>An analysis of the Candida albicans genome database for soluble secreted proteins using computer-based prediction algorithms.</title>
        <authorList>
            <person name="Lee S.A."/>
            <person name="Wormsley S."/>
            <person name="Kamoun S."/>
            <person name="Lee A.F."/>
            <person name="Joiner K."/>
            <person name="Wong B."/>
        </authorList>
    </citation>
    <scope>PREDICTION OF GPI-ANCHOR</scope>
</reference>
<reference key="6">
    <citation type="journal article" date="2003" name="Yeast">
        <title>Genome-wide identification of fungal GPI proteins.</title>
        <authorList>
            <person name="De Groot P.W."/>
            <person name="Hellingwerf K.J."/>
            <person name="Klis F.M."/>
        </authorList>
    </citation>
    <scope>PREDICTION OF GPI-ANCHOR</scope>
</reference>
<reference key="7">
    <citation type="journal article" date="2004" name="Eukaryot. Cell">
        <title>Proteomic analysis of Candida albicans cell walls reveals covalently bound carbohydrate-active enzymes and adhesins.</title>
        <authorList>
            <person name="de Groot P.W."/>
            <person name="de Boer A.D."/>
            <person name="Cunningham J."/>
            <person name="Dekker H.L."/>
            <person name="de Jong L."/>
            <person name="Hellingwerf K.J."/>
            <person name="de Koster C."/>
            <person name="Klis F.M."/>
        </authorList>
    </citation>
    <scope>IDENTIFICATION BY MASS SPECTROMETRY</scope>
    <scope>SUBCELLULAR LOCATION</scope>
</reference>
<reference key="8">
    <citation type="journal article" date="2005" name="Res. Microbiol.">
        <title>Anchorage of Candida albicans Ssr1 to the cell wall, and transcript profiling of the null mutant.</title>
        <authorList>
            <person name="Garcera A."/>
            <person name="Castillo L."/>
            <person name="Martinez A.I."/>
            <person name="Elorza M.V."/>
            <person name="Valentin E."/>
            <person name="Sentandreu R."/>
        </authorList>
    </citation>
    <scope>SUBCELLULAR LOCATION</scope>
    <scope>FUNCTION</scope>
</reference>
<reference key="9">
    <citation type="journal article" date="2007" name="Mol. Biol. Cell">
        <title>Identification of an N-acetylglucosamine transporter that mediates hyphal induction in Candida albicans.</title>
        <authorList>
            <person name="Alvarez F.J."/>
            <person name="Konopka J.B."/>
        </authorList>
    </citation>
    <scope>IDENTIFICATION BY MASS SPECTROMETRY</scope>
    <scope>SUBCELLULAR LOCATION</scope>
</reference>
<reference key="10">
    <citation type="journal article" date="2008" name="Fungal Genet. Biol.">
        <title>Functional analysis of Candida albicans GPI-anchored proteins: roles in cell wall integrity and caspofungin sensitivity.</title>
        <authorList>
            <person name="Plaine A."/>
            <person name="Walker L."/>
            <person name="Da Costa G."/>
            <person name="Mora-Montes H.M."/>
            <person name="McKinnon A."/>
            <person name="Gow N.A."/>
            <person name="Gaillardin C."/>
            <person name="Munro C.A."/>
            <person name="Richard M.L."/>
        </authorList>
    </citation>
    <scope>DISRUPTION PHENOTYPE</scope>
</reference>
<reference key="11">
    <citation type="journal article" date="2008" name="Microbiology">
        <title>Hypoxic conditions and iron restriction affect the cell-wall proteome of Candida albicans grown under vagina-simulative conditions.</title>
        <authorList>
            <person name="Sosinska G.J."/>
            <person name="de Groot P.W."/>
            <person name="Teixeira de Mattos M.J."/>
            <person name="Dekker H.L."/>
            <person name="de Koster C.G."/>
            <person name="Hellingwerf K.J."/>
            <person name="Klis F.M."/>
        </authorList>
    </citation>
    <scope>IDENTIFICATION BY MASS SPECTROMETRY</scope>
    <scope>SUBCELLULAR LOCATION</scope>
</reference>
<reference key="12">
    <citation type="journal article" date="2008" name="Proteomics">
        <title>A study of the Candida albicans cell wall proteome.</title>
        <authorList>
            <person name="Castillo L."/>
            <person name="Calvo E."/>
            <person name="Martinez A.I."/>
            <person name="Ruiz-Herrera J."/>
            <person name="Valentin E."/>
            <person name="Lopez J.A."/>
            <person name="Sentandreu R."/>
        </authorList>
    </citation>
    <scope>IDENTIFICATION BY MASS SPECTROMETRY</scope>
    <scope>SUBCELLULAR LOCATION</scope>
</reference>
<reference key="13">
    <citation type="journal article" date="2010" name="Yeast">
        <title>Mass spectrometric analysis of the secretome of Candida albicans.</title>
        <authorList>
            <person name="Sorgo A.G."/>
            <person name="Heilmann C.J."/>
            <person name="Dekker H.L."/>
            <person name="Brul S."/>
            <person name="de Koster C.G."/>
            <person name="Klis F.M."/>
        </authorList>
    </citation>
    <scope>IDENTIFICATION BY MASS SPECTROMETRY</scope>
    <scope>SUBCELLULAR LOCATION</scope>
</reference>
<reference key="14">
    <citation type="journal article" date="2011" name="Eukaryot. Cell">
        <title>Effects of fluconazole on the secretome, the wall proteome, and wall integrity of the clinical fungus Candida albicans.</title>
        <authorList>
            <person name="Sorgo A.G."/>
            <person name="Heilmann C.J."/>
            <person name="Dekker H.L."/>
            <person name="Bekker M."/>
            <person name="Brul S."/>
            <person name="de Koster C.G."/>
            <person name="de Koning L.J."/>
            <person name="Klis F.M."/>
        </authorList>
    </citation>
    <scope>IDENTIFICATION BY MASS SPECTROMETRY</scope>
    <scope>SUBCELLULAR LOCATION</scope>
    <scope>INDUCTION</scope>
</reference>
<reference key="15">
    <citation type="journal article" date="2011" name="Microbiology">
        <title>Hyphal induction in the human fungal pathogen Candida albicans reveals a characteristic wall protein profile.</title>
        <authorList>
            <person name="Heilmann C.J."/>
            <person name="Sorgo A.G."/>
            <person name="Siliakus A.R."/>
            <person name="Dekker H.L."/>
            <person name="Brul S."/>
            <person name="de Koster C.G."/>
            <person name="de Koning L.J."/>
            <person name="Klis F.M."/>
        </authorList>
    </citation>
    <scope>IDENTIFICATION BY MASS SPECTROMETRY</scope>
    <scope>SUBCELLULAR LOCATION</scope>
    <scope>INDUCTION</scope>
</reference>
<keyword id="KW-0134">Cell wall</keyword>
<keyword id="KW-1015">Disulfide bond</keyword>
<keyword id="KW-0325">Glycoprotein</keyword>
<keyword id="KW-0336">GPI-anchor</keyword>
<keyword id="KW-0349">Heme</keyword>
<keyword id="KW-0408">Iron</keyword>
<keyword id="KW-0449">Lipoprotein</keyword>
<keyword id="KW-0472">Membrane</keyword>
<keyword id="KW-0479">Metal-binding</keyword>
<keyword id="KW-1185">Reference proteome</keyword>
<keyword id="KW-0964">Secreted</keyword>
<keyword id="KW-0732">Signal</keyword>
<proteinExistence type="evidence at protein level"/>
<sequence>MASFLKISTLIAIVSTLQTTLAAPPACLLACVAKVEKGSKCSGLNDLSCICTTKNSDVEKCLKEICPNGDADTAISAFKSSCSGYSSQSSSSESESESASSEESSASASASASSSAGKSSNVEASTTKESSSAKASSSAAGSSEAVSSATETASTEESSSAAASASASASATKESSSEAASSTSSTLKESKTSTTAAASSSESTTATGVLTQSEGSAAKVGLGALVGLVGAVLL</sequence>
<organism>
    <name type="scientific">Candida albicans (strain SC5314 / ATCC MYA-2876)</name>
    <name type="common">Yeast</name>
    <dbReference type="NCBI Taxonomy" id="237561"/>
    <lineage>
        <taxon>Eukaryota</taxon>
        <taxon>Fungi</taxon>
        <taxon>Dikarya</taxon>
        <taxon>Ascomycota</taxon>
        <taxon>Saccharomycotina</taxon>
        <taxon>Pichiomycetes</taxon>
        <taxon>Debaryomycetaceae</taxon>
        <taxon>Candida/Lodderomyces clade</taxon>
        <taxon>Candida</taxon>
    </lineage>
</organism>